<organism>
    <name type="scientific">Uncultured archaeon</name>
    <dbReference type="NCBI Taxonomy" id="115547"/>
    <lineage>
        <taxon>Archaea</taxon>
        <taxon>environmental samples</taxon>
    </lineage>
</organism>
<name>FSX1_UNCAX</name>
<accession>C0HM55</accession>
<reference evidence="6" key="1">
    <citation type="journal article" date="2022" name="Nat. Commun.">
        <title>Discovery of archaeal fusexins homologous to eukaryotic HAP2/GCS1 gamete fusion proteins.</title>
        <authorList>
            <person name="Moi D."/>
            <person name="Nishio S."/>
            <person name="Li X."/>
            <person name="Valansi C."/>
            <person name="Langleib M."/>
            <person name="Brukman N.G."/>
            <person name="Flyak K."/>
            <person name="Dessimoz C."/>
            <person name="de Sanctis D."/>
            <person name="Tunyasuvunakool K."/>
            <person name="Jumper J."/>
            <person name="Grana M."/>
            <person name="Romero H."/>
            <person name="Aguilar P.S."/>
            <person name="Jovine L."/>
            <person name="Podbilewicz B."/>
        </authorList>
    </citation>
    <scope>NUCLEOTIDE SEQUENCE [GENOMIC DNA]</scope>
    <scope>X-RAY CRYSTALLOGRAPHY (2.3 ANGSTROMS) OF 25-535</scope>
    <scope>FUNCTION</scope>
    <scope>SUBUNIT</scope>
    <scope>SUBCELLULAR LOCATION</scope>
    <scope>DOMAIN</scope>
    <scope>DISULFIDE BOND</scope>
    <scope>TOPOLOGY</scope>
    <scope>MUTAGENESIS OF 142-TYR--TYR-149</scope>
</reference>
<protein>
    <recommendedName>
        <fullName evidence="1 4">Fusexin 1</fullName>
        <shortName evidence="1 4">Fsx1</shortName>
    </recommendedName>
</protein>
<dbReference type="PDB" id="7P4L">
    <property type="method" value="X-ray"/>
    <property type="resolution" value="2.30 A"/>
    <property type="chains" value="A/B/C=25-535"/>
</dbReference>
<dbReference type="PDBsum" id="7P4L"/>
<dbReference type="SMR" id="C0HM55"/>
<dbReference type="TCDB" id="1.N.9.1.1">
    <property type="family name" value="the fusexin1 (fsx1) family"/>
</dbReference>
<dbReference type="GO" id="GO:0009986">
    <property type="term" value="C:cell surface"/>
    <property type="evidence" value="ECO:0000314"/>
    <property type="project" value="UniProtKB"/>
</dbReference>
<dbReference type="GO" id="GO:0005886">
    <property type="term" value="C:plasma membrane"/>
    <property type="evidence" value="ECO:0007669"/>
    <property type="project" value="UniProtKB-SubCell"/>
</dbReference>
<dbReference type="GO" id="GO:0046872">
    <property type="term" value="F:metal ion binding"/>
    <property type="evidence" value="ECO:0007669"/>
    <property type="project" value="UniProtKB-KW"/>
</dbReference>
<dbReference type="GO" id="GO:0045026">
    <property type="term" value="P:plasma membrane fusion"/>
    <property type="evidence" value="ECO:0000314"/>
    <property type="project" value="UniProtKB"/>
</dbReference>
<dbReference type="Gene3D" id="2.60.40.10">
    <property type="entry name" value="Immunoglobulins"/>
    <property type="match status" value="1"/>
</dbReference>
<dbReference type="HAMAP" id="MF_00869">
    <property type="entry name" value="Fusexin_1"/>
    <property type="match status" value="1"/>
</dbReference>
<dbReference type="InterPro" id="IPR049902">
    <property type="entry name" value="Fsx1"/>
</dbReference>
<dbReference type="InterPro" id="IPR013783">
    <property type="entry name" value="Ig-like_fold"/>
</dbReference>
<sequence>MRRAALILAFVLFIGLSSATVTSADSITYNSGTSEFFDGDVFAIEVTADQSTDEIDIYLGASELSEKTDGEVNQDLSIEFTHQDSKLKYSTSTSDELRDIVTLTTYYEDGFDTEQDAIDAIKSDCYDLNQNGNGSGRYSRYYSVTSPVYDYEIYCFQKNEKLATPAYIDNPDEIFTAKAELQAGDKTIQSATLSNGDAGDGTVTDLGDSKISWNGNLDLGASEPENSRVIALYSNDFENGWRIGNKQSYEDYKTFIGGGDAYDLLIDWQDGTYTASEVEDELVNTDANQAVEEASSSTTDLVNAKVKDSSLDTGSFVYDTPELLSYPSFTVYVDAGENGYIEVTKPTGDPDIISTSSTEIKEGDEGTVTATVENVGDGEGEFSGRLSSCGEGFSIVDDQNTKNVGAGESVTYSFDVAFSSVSSESKEISGSCTFEVNGVESSDSTSVSVTGIQQSECNPGDQRREKNENDRWEIYTCQDNGLTYEYDVTCAEDEKAVAQGDNQFSCEKQDDDSGGGDNTGSDSGLFSNLFGGSGSGDLLTQVHTALSILAGLVAGFFGYRGARWIHGETDIKGGFKLESRNVSRVKRGSPVAGIVGAVLGFVVGYGVASVFHPVVQIIVVLGIAVGLYYFR</sequence>
<gene>
    <name evidence="1 4" type="primary">fsx1</name>
</gene>
<evidence type="ECO:0000255" key="1">
    <source>
        <dbReference type="HAMAP-Rule" id="MF_00869"/>
    </source>
</evidence>
<evidence type="ECO:0000256" key="2">
    <source>
        <dbReference type="SAM" id="MobiDB-lite"/>
    </source>
</evidence>
<evidence type="ECO:0000269" key="3">
    <source>
    </source>
</evidence>
<evidence type="ECO:0000303" key="4">
    <source>
    </source>
</evidence>
<evidence type="ECO:0000305" key="5">
    <source>
    </source>
</evidence>
<evidence type="ECO:0000312" key="6">
    <source>
        <dbReference type="PDB" id="7P4L"/>
    </source>
</evidence>
<evidence type="ECO:0007744" key="7">
    <source>
        <dbReference type="PDB" id="7P4L"/>
    </source>
</evidence>
<evidence type="ECO:0007829" key="8">
    <source>
        <dbReference type="PDB" id="7P4L"/>
    </source>
</evidence>
<feature type="signal peptide" evidence="1">
    <location>
        <begin position="1"/>
        <end position="19"/>
    </location>
</feature>
<feature type="chain" id="PRO_0000456978" description="Fusexin 1" evidence="1">
    <location>
        <begin position="20"/>
        <end position="631"/>
    </location>
</feature>
<feature type="topological domain" description="Extracellular" evidence="4">
    <location>
        <begin position="20"/>
        <end position="537"/>
    </location>
</feature>
<feature type="transmembrane region" description="Helical" evidence="1">
    <location>
        <begin position="538"/>
        <end position="558"/>
    </location>
</feature>
<feature type="topological domain" description="Cytoplasmic" evidence="4">
    <location>
        <begin position="559"/>
        <end position="590"/>
    </location>
</feature>
<feature type="transmembrane region" description="Helical" evidence="1">
    <location>
        <begin position="591"/>
        <end position="611"/>
    </location>
</feature>
<feature type="topological domain" description="Extracellular" evidence="4">
    <location>
        <position position="612"/>
    </location>
</feature>
<feature type="transmembrane region" description="Helical" evidence="1">
    <location>
        <begin position="613"/>
        <end position="630"/>
    </location>
</feature>
<feature type="topological domain" description="Cytoplasmic" evidence="4">
    <location>
        <position position="631"/>
    </location>
</feature>
<feature type="region of interest" description="Domain I N-terminus" evidence="3">
    <location>
        <begin position="20"/>
        <end position="90"/>
    </location>
</feature>
<feature type="region of interest" description="Domain II N-terminus" evidence="3">
    <location>
        <begin position="91"/>
        <end position="170"/>
    </location>
</feature>
<feature type="region of interest" description="Fusion loop, required for fusogenic activity, not required for membrane surface localization" evidence="3">
    <location>
        <begin position="143"/>
        <end position="148"/>
    </location>
</feature>
<feature type="region of interest" description="Domain I central section" evidence="3">
    <location>
        <begin position="171"/>
        <end position="224"/>
    </location>
</feature>
<feature type="region of interest" description="Domain II C-terminus" evidence="3">
    <location>
        <begin position="225"/>
        <end position="316"/>
    </location>
</feature>
<feature type="region of interest" description="Domain I C-terminus" evidence="3">
    <location>
        <begin position="317"/>
        <end position="348"/>
    </location>
</feature>
<feature type="region of interest" description="Domain III" evidence="3">
    <location>
        <begin position="349"/>
        <end position="455"/>
    </location>
</feature>
<feature type="region of interest" description="Disordered" evidence="2">
    <location>
        <begin position="443"/>
        <end position="467"/>
    </location>
</feature>
<feature type="region of interest" description="Domain IV, required for fusogenic activity" evidence="3">
    <location>
        <begin position="456"/>
        <end position="509"/>
    </location>
</feature>
<feature type="region of interest" description="Stem" evidence="3">
    <location>
        <begin position="510"/>
        <end position="537"/>
    </location>
</feature>
<feature type="binding site" evidence="3 6">
    <location>
        <position position="112"/>
    </location>
    <ligand>
        <name>Ca(2+)</name>
        <dbReference type="ChEBI" id="CHEBI:29108"/>
    </ligand>
</feature>
<feature type="binding site" evidence="3 6">
    <location>
        <position position="146"/>
    </location>
    <ligand>
        <name>Ca(2+)</name>
        <dbReference type="ChEBI" id="CHEBI:29108"/>
    </ligand>
</feature>
<feature type="binding site" evidence="3 6">
    <location>
        <position position="149"/>
    </location>
    <ligand>
        <name>Ca(2+)</name>
        <dbReference type="ChEBI" id="CHEBI:29108"/>
    </ligand>
</feature>
<feature type="binding site" evidence="3 6">
    <location>
        <position position="150"/>
    </location>
    <ligand>
        <name>Ca(2+)</name>
        <dbReference type="ChEBI" id="CHEBI:29108"/>
    </ligand>
</feature>
<feature type="disulfide bond" evidence="1 3 7">
    <location>
        <begin position="125"/>
        <end position="155"/>
    </location>
</feature>
<feature type="disulfide bond" evidence="1 3 7">
    <location>
        <begin position="389"/>
        <end position="432"/>
    </location>
</feature>
<feature type="disulfide bond" evidence="1 3 7">
    <location>
        <begin position="457"/>
        <end position="477"/>
    </location>
</feature>
<feature type="disulfide bond" evidence="1 3 7">
    <location>
        <begin position="490"/>
        <end position="506"/>
    </location>
</feature>
<feature type="mutagenesis site" description="Loss of fusogenic activity, still found on cell surface (in mammalian cells)." evidence="3">
    <original>YSVTSPVY</original>
    <variation>AGGGGA</variation>
    <location>
        <begin position="142"/>
        <end position="149"/>
    </location>
</feature>
<feature type="strand" evidence="8">
    <location>
        <begin position="27"/>
        <end position="30"/>
    </location>
</feature>
<feature type="turn" evidence="8">
    <location>
        <begin position="36"/>
        <end position="38"/>
    </location>
</feature>
<feature type="strand" evidence="8">
    <location>
        <begin position="42"/>
        <end position="47"/>
    </location>
</feature>
<feature type="strand" evidence="8">
    <location>
        <begin position="54"/>
        <end position="58"/>
    </location>
</feature>
<feature type="strand" evidence="8">
    <location>
        <begin position="76"/>
        <end position="88"/>
    </location>
</feature>
<feature type="strand" evidence="8">
    <location>
        <begin position="100"/>
        <end position="113"/>
    </location>
</feature>
<feature type="helix" evidence="8">
    <location>
        <begin position="114"/>
        <end position="124"/>
    </location>
</feature>
<feature type="strand" evidence="8">
    <location>
        <begin position="131"/>
        <end position="133"/>
    </location>
</feature>
<feature type="strand" evidence="8">
    <location>
        <begin position="136"/>
        <end position="142"/>
    </location>
</feature>
<feature type="strand" evidence="8">
    <location>
        <begin position="144"/>
        <end position="168"/>
    </location>
</feature>
<feature type="strand" evidence="8">
    <location>
        <begin position="172"/>
        <end position="198"/>
    </location>
</feature>
<feature type="strand" evidence="8">
    <location>
        <begin position="201"/>
        <end position="206"/>
    </location>
</feature>
<feature type="strand" evidence="8">
    <location>
        <begin position="209"/>
        <end position="218"/>
    </location>
</feature>
<feature type="helix" evidence="8">
    <location>
        <begin position="226"/>
        <end position="228"/>
    </location>
</feature>
<feature type="strand" evidence="8">
    <location>
        <begin position="229"/>
        <end position="233"/>
    </location>
</feature>
<feature type="helix" evidence="8">
    <location>
        <begin position="238"/>
        <end position="240"/>
    </location>
</feature>
<feature type="strand" evidence="8">
    <location>
        <begin position="241"/>
        <end position="245"/>
    </location>
</feature>
<feature type="helix" evidence="8">
    <location>
        <begin position="246"/>
        <end position="258"/>
    </location>
</feature>
<feature type="helix" evidence="8">
    <location>
        <begin position="260"/>
        <end position="269"/>
    </location>
</feature>
<feature type="helix" evidence="8">
    <location>
        <begin position="275"/>
        <end position="281"/>
    </location>
</feature>
<feature type="helix" evidence="8">
    <location>
        <begin position="285"/>
        <end position="290"/>
    </location>
</feature>
<feature type="turn" evidence="8">
    <location>
        <begin position="296"/>
        <end position="298"/>
    </location>
</feature>
<feature type="strand" evidence="8">
    <location>
        <begin position="304"/>
        <end position="308"/>
    </location>
</feature>
<feature type="turn" evidence="8">
    <location>
        <begin position="313"/>
        <end position="315"/>
    </location>
</feature>
<feature type="strand" evidence="8">
    <location>
        <begin position="317"/>
        <end position="319"/>
    </location>
</feature>
<feature type="strand" evidence="8">
    <location>
        <begin position="325"/>
        <end position="333"/>
    </location>
</feature>
<feature type="strand" evidence="8">
    <location>
        <begin position="340"/>
        <end position="344"/>
    </location>
</feature>
<feature type="strand" evidence="8">
    <location>
        <begin position="350"/>
        <end position="357"/>
    </location>
</feature>
<feature type="strand" evidence="8">
    <location>
        <begin position="366"/>
        <end position="374"/>
    </location>
</feature>
<feature type="strand" evidence="8">
    <location>
        <begin position="376"/>
        <end position="378"/>
    </location>
</feature>
<feature type="strand" evidence="8">
    <location>
        <begin position="380"/>
        <end position="389"/>
    </location>
</feature>
<feature type="strand" evidence="8">
    <location>
        <begin position="393"/>
        <end position="395"/>
    </location>
</feature>
<feature type="strand" evidence="8">
    <location>
        <begin position="400"/>
        <end position="404"/>
    </location>
</feature>
<feature type="strand" evidence="8">
    <location>
        <begin position="409"/>
        <end position="418"/>
    </location>
</feature>
<feature type="strand" evidence="8">
    <location>
        <begin position="426"/>
        <end position="437"/>
    </location>
</feature>
<feature type="strand" evidence="8">
    <location>
        <begin position="442"/>
        <end position="452"/>
    </location>
</feature>
<feature type="strand" evidence="8">
    <location>
        <begin position="462"/>
        <end position="466"/>
    </location>
</feature>
<feature type="strand" evidence="8">
    <location>
        <begin position="472"/>
        <end position="477"/>
    </location>
</feature>
<feature type="strand" evidence="8">
    <location>
        <begin position="484"/>
        <end position="489"/>
    </location>
</feature>
<feature type="strand" evidence="8">
    <location>
        <begin position="495"/>
        <end position="498"/>
    </location>
</feature>
<feature type="strand" evidence="8">
    <location>
        <begin position="504"/>
        <end position="507"/>
    </location>
</feature>
<comment type="function">
    <text evidence="1 3">Exhibits fusogenic activity (PubMed:35794124). Mediates cell-cell fusion in mammalian cells when present in both cells (bilateral fusion) (PubMed:35794124).</text>
</comment>
<comment type="subunit">
    <text evidence="3">Monomer in solution, crystallizes as a trimer in high salt (2.5 M NaCl, 0.2 M CaCl(2)). The trimer is stabilized by interdomain contacts and numerous Ca(2+) and Na(+) ions.</text>
</comment>
<comment type="subcellular location">
    <subcellularLocation>
        <location evidence="1 3">Cell surface</location>
    </subcellularLocation>
    <subcellularLocation>
        <location evidence="1 5">Cell membrane</location>
        <topology evidence="1">Multi-pass membrane protein</topology>
    </subcellularLocation>
</comment>
<comment type="domain">
    <text evidence="3">The extracellular N-terminus has 4 domains; the first 3 are structurally similar to fusogens from plants, C.elegans and viruses, while the fourth domain is unique to archaea. Domains I and II are discontinuous, domain IV cannot be replaced. The protein can be anchored to the membrane by either a different transmembrane helix or by a GPI-anchored construct and still directs membrane fusion. The fusion loop in domain II is stabilized by a Ca(2+) ion so that it protrudes from the molecule.</text>
</comment>
<comment type="miscellaneous">
    <text evidence="3">This entry represents a metagenomic sequence isolated from an uncultured archaeon from a hypersaline environment.</text>
</comment>
<comment type="similarity">
    <text evidence="1">Belongs to the HAP2/GCS1 family. Fusexin 1 subfamily.</text>
</comment>
<keyword id="KW-0002">3D-structure</keyword>
<keyword id="KW-0106">Calcium</keyword>
<keyword id="KW-1003">Cell membrane</keyword>
<keyword id="KW-1015">Disulfide bond</keyword>
<keyword id="KW-0472">Membrane</keyword>
<keyword id="KW-0479">Metal-binding</keyword>
<keyword id="KW-0732">Signal</keyword>
<keyword id="KW-0812">Transmembrane</keyword>
<keyword id="KW-1133">Transmembrane helix</keyword>
<proteinExistence type="evidence at protein level"/>